<accession>Q99VM3</accession>
<proteinExistence type="inferred from homology"/>
<dbReference type="EMBL" id="BA000017">
    <property type="protein sequence ID" value="BAB56914.1"/>
    <property type="molecule type" value="Genomic_DNA"/>
</dbReference>
<dbReference type="RefSeq" id="WP_000617735.1">
    <property type="nucleotide sequence ID" value="NC_002758.2"/>
</dbReference>
<dbReference type="SMR" id="Q99VM3"/>
<dbReference type="KEGG" id="sav:SAV0752"/>
<dbReference type="HOGENOM" id="CLU_071472_0_3_9"/>
<dbReference type="PhylomeDB" id="Q99VM3"/>
<dbReference type="Proteomes" id="UP000002481">
    <property type="component" value="Chromosome"/>
</dbReference>
<dbReference type="GO" id="GO:0022627">
    <property type="term" value="C:cytosolic small ribosomal subunit"/>
    <property type="evidence" value="ECO:0007669"/>
    <property type="project" value="TreeGrafter"/>
</dbReference>
<dbReference type="GO" id="GO:0043024">
    <property type="term" value="F:ribosomal small subunit binding"/>
    <property type="evidence" value="ECO:0007669"/>
    <property type="project" value="TreeGrafter"/>
</dbReference>
<dbReference type="GO" id="GO:0045900">
    <property type="term" value="P:negative regulation of translational elongation"/>
    <property type="evidence" value="ECO:0007669"/>
    <property type="project" value="TreeGrafter"/>
</dbReference>
<dbReference type="CDD" id="cd00552">
    <property type="entry name" value="RaiA"/>
    <property type="match status" value="1"/>
</dbReference>
<dbReference type="FunFam" id="3.30.160.100:FF:000003">
    <property type="entry name" value="Ribosome hibernation promoting factor"/>
    <property type="match status" value="1"/>
</dbReference>
<dbReference type="FunFam" id="3.30.505.50:FF:000001">
    <property type="entry name" value="Ribosome hibernation promoting factor"/>
    <property type="match status" value="1"/>
</dbReference>
<dbReference type="Gene3D" id="3.30.160.100">
    <property type="entry name" value="Ribosome hibernation promotion factor-like"/>
    <property type="match status" value="1"/>
</dbReference>
<dbReference type="Gene3D" id="3.30.505.50">
    <property type="entry name" value="Sigma 54 modulation/S30EA ribosomal protein, C-terminal domain"/>
    <property type="match status" value="1"/>
</dbReference>
<dbReference type="HAMAP" id="MF_00839">
    <property type="entry name" value="HPF"/>
    <property type="match status" value="1"/>
</dbReference>
<dbReference type="InterPro" id="IPR050574">
    <property type="entry name" value="HPF/YfiA_ribosome-assoc"/>
</dbReference>
<dbReference type="InterPro" id="IPR034694">
    <property type="entry name" value="HPF_long/plastid"/>
</dbReference>
<dbReference type="InterPro" id="IPR036567">
    <property type="entry name" value="RHF-like"/>
</dbReference>
<dbReference type="InterPro" id="IPR003489">
    <property type="entry name" value="RHF/RaiA"/>
</dbReference>
<dbReference type="InterPro" id="IPR032528">
    <property type="entry name" value="Ribosom_S30AE_C"/>
</dbReference>
<dbReference type="InterPro" id="IPR038416">
    <property type="entry name" value="Ribosom_S30AE_C_sf"/>
</dbReference>
<dbReference type="NCBIfam" id="TIGR00741">
    <property type="entry name" value="yfiA"/>
    <property type="match status" value="1"/>
</dbReference>
<dbReference type="PANTHER" id="PTHR33231">
    <property type="entry name" value="30S RIBOSOMAL PROTEIN"/>
    <property type="match status" value="1"/>
</dbReference>
<dbReference type="PANTHER" id="PTHR33231:SF1">
    <property type="entry name" value="30S RIBOSOMAL PROTEIN"/>
    <property type="match status" value="1"/>
</dbReference>
<dbReference type="Pfam" id="PF16321">
    <property type="entry name" value="Ribosom_S30AE_C"/>
    <property type="match status" value="1"/>
</dbReference>
<dbReference type="Pfam" id="PF02482">
    <property type="entry name" value="Ribosomal_S30AE"/>
    <property type="match status" value="1"/>
</dbReference>
<dbReference type="SUPFAM" id="SSF69754">
    <property type="entry name" value="Ribosome binding protein Y (YfiA homologue)"/>
    <property type="match status" value="1"/>
</dbReference>
<gene>
    <name evidence="1" type="primary">hpf</name>
    <name type="ordered locus">SAV0752</name>
</gene>
<evidence type="ECO:0000255" key="1">
    <source>
        <dbReference type="HAMAP-Rule" id="MF_00839"/>
    </source>
</evidence>
<comment type="function">
    <text evidence="1">Required for dimerization of active 70S ribosomes into 100S ribosomes in stationary phase; 100S ribosomes are translationally inactive and sometimes present during exponential growth.</text>
</comment>
<comment type="subunit">
    <text evidence="1">Interacts with 100S ribosomes.</text>
</comment>
<comment type="subcellular location">
    <subcellularLocation>
        <location evidence="1">Cytoplasm</location>
    </subcellularLocation>
</comment>
<comment type="similarity">
    <text evidence="1">Belongs to the HPF/YfiA ribosome-associated protein family. Long HPF subfamily.</text>
</comment>
<keyword id="KW-0963">Cytoplasm</keyword>
<keyword id="KW-0810">Translation regulation</keyword>
<reference key="1">
    <citation type="journal article" date="2001" name="Lancet">
        <title>Whole genome sequencing of meticillin-resistant Staphylococcus aureus.</title>
        <authorList>
            <person name="Kuroda M."/>
            <person name="Ohta T."/>
            <person name="Uchiyama I."/>
            <person name="Baba T."/>
            <person name="Yuzawa H."/>
            <person name="Kobayashi I."/>
            <person name="Cui L."/>
            <person name="Oguchi A."/>
            <person name="Aoki K."/>
            <person name="Nagai Y."/>
            <person name="Lian J.-Q."/>
            <person name="Ito T."/>
            <person name="Kanamori M."/>
            <person name="Matsumaru H."/>
            <person name="Maruyama A."/>
            <person name="Murakami H."/>
            <person name="Hosoyama A."/>
            <person name="Mizutani-Ui Y."/>
            <person name="Takahashi N.K."/>
            <person name="Sawano T."/>
            <person name="Inoue R."/>
            <person name="Kaito C."/>
            <person name="Sekimizu K."/>
            <person name="Hirakawa H."/>
            <person name="Kuhara S."/>
            <person name="Goto S."/>
            <person name="Yabuzaki J."/>
            <person name="Kanehisa M."/>
            <person name="Yamashita A."/>
            <person name="Oshima K."/>
            <person name="Furuya K."/>
            <person name="Yoshino C."/>
            <person name="Shiba T."/>
            <person name="Hattori M."/>
            <person name="Ogasawara N."/>
            <person name="Hayashi H."/>
            <person name="Hiramatsu K."/>
        </authorList>
    </citation>
    <scope>NUCLEOTIDE SEQUENCE [LARGE SCALE GENOMIC DNA]</scope>
    <source>
        <strain>Mu50 / ATCC 700699</strain>
    </source>
</reference>
<protein>
    <recommendedName>
        <fullName evidence="1">Ribosome hibernation promotion factor</fullName>
        <shortName evidence="1">HPF</shortName>
    </recommendedName>
</protein>
<name>HPF_STAAM</name>
<sequence length="190" mass="22213">MIRFEIHGDNLTITDAIRNYIEEKIGKLERYFNDVPNAVAHVKVKTYSNSATKIEVTIPLKNVTLRAEERNDDLYAGIDLINNKLERQVRKYKTRINRKSRDRGDQEVFVAELQEMQETQVDNDAYDDNEIEIIRSKEFSLKPMDSEEAVLQMNLLGHDFFVFTDRETDGTSIVYRRKDGKYGLIQTSEQ</sequence>
<organism>
    <name type="scientific">Staphylococcus aureus (strain Mu50 / ATCC 700699)</name>
    <dbReference type="NCBI Taxonomy" id="158878"/>
    <lineage>
        <taxon>Bacteria</taxon>
        <taxon>Bacillati</taxon>
        <taxon>Bacillota</taxon>
        <taxon>Bacilli</taxon>
        <taxon>Bacillales</taxon>
        <taxon>Staphylococcaceae</taxon>
        <taxon>Staphylococcus</taxon>
    </lineage>
</organism>
<feature type="chain" id="PRO_0000291316" description="Ribosome hibernation promotion factor">
    <location>
        <begin position="1"/>
        <end position="190"/>
    </location>
</feature>